<name>TIFA_XENTR</name>
<evidence type="ECO:0000250" key="1">
    <source>
        <dbReference type="UniProtKB" id="Q2MHQ9"/>
    </source>
</evidence>
<evidence type="ECO:0000250" key="2">
    <source>
        <dbReference type="UniProtKB" id="Q96CG3"/>
    </source>
</evidence>
<evidence type="ECO:0000255" key="3">
    <source>
        <dbReference type="PROSITE-ProRule" id="PRU00086"/>
    </source>
</evidence>
<evidence type="ECO:0000305" key="4"/>
<organism>
    <name type="scientific">Xenopus tropicalis</name>
    <name type="common">Western clawed frog</name>
    <name type="synonym">Silurana tropicalis</name>
    <dbReference type="NCBI Taxonomy" id="8364"/>
    <lineage>
        <taxon>Eukaryota</taxon>
        <taxon>Metazoa</taxon>
        <taxon>Chordata</taxon>
        <taxon>Craniata</taxon>
        <taxon>Vertebrata</taxon>
        <taxon>Euteleostomi</taxon>
        <taxon>Amphibia</taxon>
        <taxon>Batrachia</taxon>
        <taxon>Anura</taxon>
        <taxon>Pipoidea</taxon>
        <taxon>Pipidae</taxon>
        <taxon>Xenopodinae</taxon>
        <taxon>Xenopus</taxon>
        <taxon>Silurana</taxon>
    </lineage>
</organism>
<proteinExistence type="evidence at transcript level"/>
<gene>
    <name evidence="2" type="primary">tifa</name>
</gene>
<feature type="chain" id="PRO_0000391617" description="TRAF-interacting protein with FHA domain-containing protein A">
    <location>
        <begin position="1"/>
        <end position="177"/>
    </location>
</feature>
<feature type="domain" description="FHA" evidence="3">
    <location>
        <begin position="48"/>
        <end position="104"/>
    </location>
</feature>
<sequence>MDETLNVDTEQTLTCLTLTMYHPNHQDQKLFRGINFSRKEEIKADAVVAFGRDYNVCRYPLLSNRVSRIQFNLQFFKHFNCSTTAIEIKNLSKKNKLYVDNLELDYLNKIELPPKCMIRFGDFQILAVIERGDCDEKFEICCEKSHVSLVQDSFIPTMQPIPECGTLNAVEIDENEY</sequence>
<keyword id="KW-0963">Cytoplasm</keyword>
<keyword id="KW-0391">Immunity</keyword>
<keyword id="KW-0399">Innate immunity</keyword>
<keyword id="KW-1185">Reference proteome</keyword>
<protein>
    <recommendedName>
        <fullName evidence="4">TRAF-interacting protein with FHA domain-containing protein A</fullName>
    </recommendedName>
</protein>
<reference key="1">
    <citation type="submission" date="2008-08" db="EMBL/GenBank/DDBJ databases">
        <authorList>
            <consortium name="NIH - Xenopus Gene Collection (XGC) project"/>
        </authorList>
    </citation>
    <scope>NUCLEOTIDE SEQUENCE [LARGE SCALE MRNA]</scope>
    <source>
        <tissue>Brain</tissue>
    </source>
</reference>
<comment type="function">
    <text evidence="1 2">Adapter molecule that plays a key role in the activation of pro-inflammatory NF-kappa-B signaling following detection of bacterial pathogen-associated molecular pattern metabolites (PAMPs) (By similarity). Promotes activation of an innate immune response by inducing the oligomerization and polyubiquitination of TRAF6, which leads to the activation of TAK1 and IKK through a proteasome-independent mechanism (By similarity).</text>
</comment>
<comment type="subunit">
    <text evidence="1">Interacts with traf6.</text>
</comment>
<comment type="subcellular location">
    <subcellularLocation>
        <location evidence="2">Cytoplasm</location>
    </subcellularLocation>
</comment>
<comment type="similarity">
    <text evidence="4">Belongs to the TIFA family.</text>
</comment>
<dbReference type="EMBL" id="BC168551">
    <property type="protein sequence ID" value="AAI68551.1"/>
    <property type="molecule type" value="mRNA"/>
</dbReference>
<dbReference type="RefSeq" id="NP_001135653.1">
    <property type="nucleotide sequence ID" value="NM_001142181.1"/>
</dbReference>
<dbReference type="SMR" id="B5DE70"/>
<dbReference type="FunCoup" id="B5DE70">
    <property type="interactions" value="985"/>
</dbReference>
<dbReference type="STRING" id="8364.ENSXETP00000011340"/>
<dbReference type="PaxDb" id="8364-ENSXETP00000052013"/>
<dbReference type="GeneID" id="100216213"/>
<dbReference type="KEGG" id="xtr:100216213"/>
<dbReference type="AGR" id="Xenbase:XB-GENE-951828"/>
<dbReference type="CTD" id="92610"/>
<dbReference type="Xenbase" id="XB-GENE-951828">
    <property type="gene designation" value="tifa"/>
</dbReference>
<dbReference type="eggNOG" id="ENOG502S0RF">
    <property type="taxonomic scope" value="Eukaryota"/>
</dbReference>
<dbReference type="HOGENOM" id="CLU_125520_0_0_1"/>
<dbReference type="InParanoid" id="B5DE70"/>
<dbReference type="OMA" id="TITCLQM"/>
<dbReference type="OrthoDB" id="9893545at2759"/>
<dbReference type="PhylomeDB" id="B5DE70"/>
<dbReference type="TreeFam" id="TF333218"/>
<dbReference type="Reactome" id="R-XTR-9645460">
    <property type="pathway name" value="Alpha-protein kinase 1 signaling pathway"/>
</dbReference>
<dbReference type="Proteomes" id="UP000008143">
    <property type="component" value="Chromosome 1"/>
</dbReference>
<dbReference type="Bgee" id="ENSXETG00000024109">
    <property type="expression patterns" value="Expressed in egg cell and 16 other cell types or tissues"/>
</dbReference>
<dbReference type="GO" id="GO:0005737">
    <property type="term" value="C:cytoplasm"/>
    <property type="evidence" value="ECO:0000250"/>
    <property type="project" value="UniProtKB"/>
</dbReference>
<dbReference type="GO" id="GO:0002753">
    <property type="term" value="P:cytoplasmic pattern recognition receptor signaling pathway"/>
    <property type="evidence" value="ECO:0000250"/>
    <property type="project" value="UniProtKB"/>
</dbReference>
<dbReference type="GO" id="GO:0045087">
    <property type="term" value="P:innate immune response"/>
    <property type="evidence" value="ECO:0000250"/>
    <property type="project" value="UniProtKB"/>
</dbReference>
<dbReference type="GO" id="GO:0043123">
    <property type="term" value="P:positive regulation of canonical NF-kappaB signal transduction"/>
    <property type="evidence" value="ECO:0000250"/>
    <property type="project" value="UniProtKB"/>
</dbReference>
<dbReference type="GO" id="GO:0051260">
    <property type="term" value="P:protein homooligomerization"/>
    <property type="evidence" value="ECO:0000250"/>
    <property type="project" value="UniProtKB"/>
</dbReference>
<dbReference type="CDD" id="cd22714">
    <property type="entry name" value="FHA_TIFA"/>
    <property type="match status" value="1"/>
</dbReference>
<dbReference type="FunFam" id="2.60.200.20:FF:000087">
    <property type="entry name" value="TRAF-interacting protein with FHA domain-containing protein A"/>
    <property type="match status" value="1"/>
</dbReference>
<dbReference type="Gene3D" id="2.60.200.20">
    <property type="match status" value="1"/>
</dbReference>
<dbReference type="InterPro" id="IPR000253">
    <property type="entry name" value="FHA_dom"/>
</dbReference>
<dbReference type="InterPro" id="IPR008984">
    <property type="entry name" value="SMAD_FHA_dom_sf"/>
</dbReference>
<dbReference type="InterPro" id="IPR033621">
    <property type="entry name" value="TIFA"/>
</dbReference>
<dbReference type="PANTHER" id="PTHR31266:SF2">
    <property type="entry name" value="TRAF-INTERACTING PROTEIN WITH FHA DOMAIN-CONTAINING PROTEIN A"/>
    <property type="match status" value="1"/>
</dbReference>
<dbReference type="PANTHER" id="PTHR31266">
    <property type="entry name" value="TRAF-INTERACTING PROTEIN WITH FHA DOMAIN-CONTAINING PROTEIN A FAMILY MEMBER"/>
    <property type="match status" value="1"/>
</dbReference>
<dbReference type="Pfam" id="PF00498">
    <property type="entry name" value="FHA"/>
    <property type="match status" value="1"/>
</dbReference>
<dbReference type="SUPFAM" id="SSF49879">
    <property type="entry name" value="SMAD/FHA domain"/>
    <property type="match status" value="1"/>
</dbReference>
<dbReference type="PROSITE" id="PS50006">
    <property type="entry name" value="FHA_DOMAIN"/>
    <property type="match status" value="1"/>
</dbReference>
<accession>B5DE70</accession>